<sequence length="346" mass="38871">MNPLILTIILMTVFLGTMIVMASSHWLMIWIGFEMNLLAIIPILMKKYNPRAMEASTKYFLTQATASMLLMMAIIINLMHSGQWTITKVFNPTASIIMTLALAMKLGLTPFHFWVPEVTQGISLTSGLILLTWQKLAPMSILYQISPSINLNILLTMAVLSILVGGWGGLNQTQLRKIMAYSSIAHMGWMAAILVYNPTLTMLNMLIYIMMTLTMFMLFIHSSSTTTLSLSHTWNKAPLITTLILITLLSMGGLPPLSGFMPKWMIIQELTKNSSIILPTLMAIMALLNLYFYMRLTYSTSLTMFPSTNNMKMKWQFETKQITLLPPLIIASSLLLPLTPMLSILD</sequence>
<reference key="1">
    <citation type="journal article" date="1996" name="J. Mol. Evol.">
        <title>The complete mitochondrial DNA (mtDNA) of the donkey and mtDNA comparisons among four closely related mammalian species-pairs.</title>
        <authorList>
            <person name="Xu X."/>
            <person name="Gullberg A."/>
            <person name="Arnason U."/>
        </authorList>
    </citation>
    <scope>NUCLEOTIDE SEQUENCE [GENOMIC DNA]</scope>
    <source>
        <tissue>Kidney</tissue>
    </source>
</reference>
<gene>
    <name evidence="1" type="primary">MT-ND2</name>
    <name type="synonym">MTND2</name>
    <name type="synonym">NADH2</name>
    <name type="synonym">ND2</name>
</gene>
<feature type="chain" id="PRO_0000117586" description="NADH-ubiquinone oxidoreductase chain 2">
    <location>
        <begin position="1"/>
        <end position="346"/>
    </location>
</feature>
<feature type="transmembrane region" description="Helical" evidence="3">
    <location>
        <begin position="3"/>
        <end position="23"/>
    </location>
</feature>
<feature type="transmembrane region" description="Helical" evidence="3">
    <location>
        <begin position="25"/>
        <end position="45"/>
    </location>
</feature>
<feature type="transmembrane region" description="Helical" evidence="3">
    <location>
        <begin position="59"/>
        <end position="79"/>
    </location>
</feature>
<feature type="transmembrane region" description="Helical" evidence="3">
    <location>
        <begin position="96"/>
        <end position="116"/>
    </location>
</feature>
<feature type="transmembrane region" description="Helical" evidence="3">
    <location>
        <begin position="122"/>
        <end position="142"/>
    </location>
</feature>
<feature type="transmembrane region" description="Helical" evidence="3">
    <location>
        <begin position="149"/>
        <end position="169"/>
    </location>
</feature>
<feature type="transmembrane region" description="Helical" evidence="3">
    <location>
        <begin position="178"/>
        <end position="198"/>
    </location>
</feature>
<feature type="transmembrane region" description="Helical" evidence="3">
    <location>
        <begin position="200"/>
        <end position="220"/>
    </location>
</feature>
<feature type="transmembrane region" description="Helical" evidence="3">
    <location>
        <begin position="237"/>
        <end position="257"/>
    </location>
</feature>
<feature type="transmembrane region" description="Helical" evidence="3">
    <location>
        <begin position="274"/>
        <end position="294"/>
    </location>
</feature>
<feature type="transmembrane region" description="Helical" evidence="3">
    <location>
        <begin position="322"/>
        <end position="342"/>
    </location>
</feature>
<comment type="function">
    <text evidence="1">Core subunit of the mitochondrial membrane respiratory chain NADH dehydrogenase (Complex I) which catalyzes electron transfer from NADH through the respiratory chain, using ubiquinone as an electron acceptor. Essential for the catalytic activity and assembly of complex I.</text>
</comment>
<comment type="catalytic activity">
    <reaction evidence="1">
        <text>a ubiquinone + NADH + 5 H(+)(in) = a ubiquinol + NAD(+) + 4 H(+)(out)</text>
        <dbReference type="Rhea" id="RHEA:29091"/>
        <dbReference type="Rhea" id="RHEA-COMP:9565"/>
        <dbReference type="Rhea" id="RHEA-COMP:9566"/>
        <dbReference type="ChEBI" id="CHEBI:15378"/>
        <dbReference type="ChEBI" id="CHEBI:16389"/>
        <dbReference type="ChEBI" id="CHEBI:17976"/>
        <dbReference type="ChEBI" id="CHEBI:57540"/>
        <dbReference type="ChEBI" id="CHEBI:57945"/>
        <dbReference type="EC" id="7.1.1.2"/>
    </reaction>
</comment>
<comment type="subunit">
    <text evidence="1 2">Core subunit of respiratory chain NADH dehydrogenase (Complex I) which is composed of 45 different subunits. Interacts with TMEM242 (By similarity).</text>
</comment>
<comment type="subcellular location">
    <subcellularLocation>
        <location evidence="2">Mitochondrion inner membrane</location>
        <topology evidence="3">Multi-pass membrane protein</topology>
    </subcellularLocation>
</comment>
<comment type="similarity">
    <text evidence="4">Belongs to the complex I subunit 2 family.</text>
</comment>
<name>NU2M_EQUAS</name>
<protein>
    <recommendedName>
        <fullName evidence="1">NADH-ubiquinone oxidoreductase chain 2</fullName>
        <ecNumber evidence="1">7.1.1.2</ecNumber>
    </recommendedName>
    <alternativeName>
        <fullName>NADH dehydrogenase subunit 2</fullName>
    </alternativeName>
</protein>
<geneLocation type="mitochondrion"/>
<dbReference type="EC" id="7.1.1.2" evidence="1"/>
<dbReference type="EMBL" id="X97337">
    <property type="protein sequence ID" value="CAA66015.1"/>
    <property type="molecule type" value="Genomic_DNA"/>
</dbReference>
<dbReference type="PIR" id="T11364">
    <property type="entry name" value="T11364"/>
</dbReference>
<dbReference type="RefSeq" id="NP_007382.1">
    <property type="nucleotide sequence ID" value="NC_001788.1"/>
</dbReference>
<dbReference type="SMR" id="P92476"/>
<dbReference type="GeneID" id="808059"/>
<dbReference type="KEGG" id="eai:808059"/>
<dbReference type="CTD" id="4536"/>
<dbReference type="Proteomes" id="UP000694387">
    <property type="component" value="Mitochondrion MT"/>
</dbReference>
<dbReference type="GO" id="GO:0005743">
    <property type="term" value="C:mitochondrial inner membrane"/>
    <property type="evidence" value="ECO:0000250"/>
    <property type="project" value="UniProtKB"/>
</dbReference>
<dbReference type="GO" id="GO:0008137">
    <property type="term" value="F:NADH dehydrogenase (ubiquinone) activity"/>
    <property type="evidence" value="ECO:0000250"/>
    <property type="project" value="UniProtKB"/>
</dbReference>
<dbReference type="GO" id="GO:0006120">
    <property type="term" value="P:mitochondrial electron transport, NADH to ubiquinone"/>
    <property type="evidence" value="ECO:0000250"/>
    <property type="project" value="UniProtKB"/>
</dbReference>
<dbReference type="GO" id="GO:0032981">
    <property type="term" value="P:mitochondrial respiratory chain complex I assembly"/>
    <property type="evidence" value="ECO:0000250"/>
    <property type="project" value="UniProtKB"/>
</dbReference>
<dbReference type="InterPro" id="IPR050175">
    <property type="entry name" value="Complex_I_Subunit_2"/>
</dbReference>
<dbReference type="InterPro" id="IPR010933">
    <property type="entry name" value="NADH_DH_su2_C"/>
</dbReference>
<dbReference type="InterPro" id="IPR003917">
    <property type="entry name" value="NADH_UbQ_OxRdtase_chain2"/>
</dbReference>
<dbReference type="InterPro" id="IPR001750">
    <property type="entry name" value="ND/Mrp_TM"/>
</dbReference>
<dbReference type="PANTHER" id="PTHR46552">
    <property type="entry name" value="NADH-UBIQUINONE OXIDOREDUCTASE CHAIN 2"/>
    <property type="match status" value="1"/>
</dbReference>
<dbReference type="PANTHER" id="PTHR46552:SF1">
    <property type="entry name" value="NADH-UBIQUINONE OXIDOREDUCTASE CHAIN 2"/>
    <property type="match status" value="1"/>
</dbReference>
<dbReference type="Pfam" id="PF06444">
    <property type="entry name" value="NADH_dehy_S2_C"/>
    <property type="match status" value="1"/>
</dbReference>
<dbReference type="Pfam" id="PF00361">
    <property type="entry name" value="Proton_antipo_M"/>
    <property type="match status" value="1"/>
</dbReference>
<dbReference type="PRINTS" id="PR01436">
    <property type="entry name" value="NADHDHGNASE2"/>
</dbReference>
<keyword id="KW-0249">Electron transport</keyword>
<keyword id="KW-0472">Membrane</keyword>
<keyword id="KW-0496">Mitochondrion</keyword>
<keyword id="KW-0999">Mitochondrion inner membrane</keyword>
<keyword id="KW-0520">NAD</keyword>
<keyword id="KW-1185">Reference proteome</keyword>
<keyword id="KW-0679">Respiratory chain</keyword>
<keyword id="KW-1278">Translocase</keyword>
<keyword id="KW-0812">Transmembrane</keyword>
<keyword id="KW-1133">Transmembrane helix</keyword>
<keyword id="KW-0813">Transport</keyword>
<keyword id="KW-0830">Ubiquinone</keyword>
<organism>
    <name type="scientific">Equus asinus</name>
    <name type="common">Donkey</name>
    <name type="synonym">Equus africanus asinus</name>
    <dbReference type="NCBI Taxonomy" id="9793"/>
    <lineage>
        <taxon>Eukaryota</taxon>
        <taxon>Metazoa</taxon>
        <taxon>Chordata</taxon>
        <taxon>Craniata</taxon>
        <taxon>Vertebrata</taxon>
        <taxon>Euteleostomi</taxon>
        <taxon>Mammalia</taxon>
        <taxon>Eutheria</taxon>
        <taxon>Laurasiatheria</taxon>
        <taxon>Perissodactyla</taxon>
        <taxon>Equidae</taxon>
        <taxon>Equus</taxon>
    </lineage>
</organism>
<accession>P92476</accession>
<proteinExistence type="inferred from homology"/>
<evidence type="ECO:0000250" key="1">
    <source>
        <dbReference type="UniProtKB" id="P03891"/>
    </source>
</evidence>
<evidence type="ECO:0000250" key="2">
    <source>
        <dbReference type="UniProtKB" id="P03892"/>
    </source>
</evidence>
<evidence type="ECO:0000255" key="3"/>
<evidence type="ECO:0000305" key="4"/>